<protein>
    <recommendedName>
        <fullName>NAD(P) transhydrogenase subunit alpha</fullName>
        <ecNumber evidence="2">7.1.1.1</ecNumber>
    </recommendedName>
    <alternativeName>
        <fullName>Nicotinamide nucleotide transhydrogenase subunit alpha</fullName>
    </alternativeName>
    <alternativeName>
        <fullName>Pyridine nucleotide transhydrogenase subunit alpha</fullName>
    </alternativeName>
</protein>
<keyword id="KW-0002">3D-structure</keyword>
<keyword id="KW-0997">Cell inner membrane</keyword>
<keyword id="KW-1003">Cell membrane</keyword>
<keyword id="KW-0903">Direct protein sequencing</keyword>
<keyword id="KW-0472">Membrane</keyword>
<keyword id="KW-0520">NAD</keyword>
<keyword id="KW-0521">NADP</keyword>
<keyword id="KW-0547">Nucleotide-binding</keyword>
<keyword id="KW-1185">Reference proteome</keyword>
<keyword id="KW-1278">Translocase</keyword>
<keyword id="KW-0812">Transmembrane</keyword>
<keyword id="KW-1133">Transmembrane helix</keyword>
<gene>
    <name type="primary">pntA</name>
    <name type="ordered locus">b1603</name>
    <name type="ordered locus">JW1595</name>
</gene>
<organism>
    <name type="scientific">Escherichia coli (strain K12)</name>
    <dbReference type="NCBI Taxonomy" id="83333"/>
    <lineage>
        <taxon>Bacteria</taxon>
        <taxon>Pseudomonadati</taxon>
        <taxon>Pseudomonadota</taxon>
        <taxon>Gammaproteobacteria</taxon>
        <taxon>Enterobacterales</taxon>
        <taxon>Enterobacteriaceae</taxon>
        <taxon>Escherichia</taxon>
    </lineage>
</organism>
<comment type="function">
    <text evidence="2">The transhydrogenation between NADH and NADP is coupled to respiration and ATP hydrolysis and functions as a proton pump across the membrane.</text>
</comment>
<comment type="catalytic activity">
    <reaction evidence="2">
        <text>NAD(+) + NADPH + H(+)(in) = NADH + NADP(+) + H(+)(out)</text>
        <dbReference type="Rhea" id="RHEA:47992"/>
        <dbReference type="ChEBI" id="CHEBI:15378"/>
        <dbReference type="ChEBI" id="CHEBI:57540"/>
        <dbReference type="ChEBI" id="CHEBI:57783"/>
        <dbReference type="ChEBI" id="CHEBI:57945"/>
        <dbReference type="ChEBI" id="CHEBI:58349"/>
        <dbReference type="EC" id="7.1.1.1"/>
    </reaction>
</comment>
<comment type="subunit">
    <text evidence="2 3">Heterodimer of an alpha (PntA) and a beta (PntB) chain. Alpha subunit serves as the dimerization unit.</text>
</comment>
<comment type="subcellular location">
    <subcellularLocation>
        <location>Cell inner membrane</location>
        <topology>Multi-pass membrane protein</topology>
    </subcellularLocation>
</comment>
<comment type="similarity">
    <text evidence="4">Belongs to the AlaDH/PNT family.</text>
</comment>
<proteinExistence type="evidence at protein level"/>
<sequence>MRIGIPRERLTNETRVAATPKTVEQLLKLGFTVAVESGAGQLASFDDKAFVQAGAEIVEGNSVWQSEIILKVNAPLDDEIALLNPGTTLVSFIWPAQNPELMQKLAERNVTVMAMDSVPRISRAQSLDALSSMANIAGYRAIVEAAHEFGRFFTGQITAAGKVPPAKVMVIGAGVAGLAAIGAANSLGAIVRAFDTRPEVKEQVQSMGAEFLELDFKEEAGSGDGYAKVMSDAFIKAEMELFAAQAKEVDIIVTTALIPGKPAPKLITREMVDSMKAGSVIVDLAAQNGGNCEYTVPGEIFTTENGVKVIGYTDLPGRLPTQSSQLYGTNLVNLLKLLCKEKDGNITVDFDDVVIRGVTVIRAGEITWPAPPIQVSAQPQAAQKAAPEVKTEEKCTCSPWRKYALMALAIILFGWMASVAPKEFLGHFTVFALACVVGYYVVWNVSHALHTPLMSVTNAISGIIVVGALLQIGQGGWVSFLSFIAVLIASINIFGGFTVTQRMLKMFRKN</sequence>
<feature type="chain" id="PRO_0000199017" description="NAD(P) transhydrogenase subunit alpha">
    <location>
        <begin position="1"/>
        <end position="510"/>
    </location>
</feature>
<feature type="topological domain" description="Cytoplasmic" evidence="1">
    <location>
        <begin position="1"/>
        <end position="401"/>
    </location>
</feature>
<feature type="transmembrane region" description="Helical" evidence="1">
    <location>
        <begin position="402"/>
        <end position="422"/>
    </location>
</feature>
<feature type="transmembrane region" description="Helical" evidence="1">
    <location>
        <begin position="423"/>
        <end position="443"/>
    </location>
</feature>
<feature type="topological domain" description="Cytoplasmic" evidence="1">
    <location>
        <begin position="444"/>
        <end position="452"/>
    </location>
</feature>
<feature type="transmembrane region" description="Helical" evidence="1">
    <location>
        <begin position="453"/>
        <end position="473"/>
    </location>
</feature>
<feature type="topological domain" description="Periplasmic" evidence="1">
    <location>
        <begin position="474"/>
        <end position="476"/>
    </location>
</feature>
<feature type="transmembrane region" description="Helical" evidence="1">
    <location>
        <begin position="477"/>
        <end position="497"/>
    </location>
</feature>
<feature type="topological domain" description="Cytoplasmic" evidence="1">
    <location>
        <begin position="498"/>
        <end position="510"/>
    </location>
</feature>
<feature type="binding site" evidence="3">
    <location>
        <begin position="120"/>
        <end position="122"/>
    </location>
    <ligand>
        <name>NAD(+)</name>
        <dbReference type="ChEBI" id="CHEBI:57540"/>
    </ligand>
</feature>
<feature type="binding site" evidence="3">
    <location>
        <position position="175"/>
    </location>
    <ligand>
        <name>NAD(+)</name>
        <dbReference type="ChEBI" id="CHEBI:57540"/>
    </ligand>
</feature>
<feature type="binding site" evidence="3">
    <location>
        <begin position="195"/>
        <end position="197"/>
    </location>
    <ligand>
        <name>NAD(+)</name>
        <dbReference type="ChEBI" id="CHEBI:57540"/>
    </ligand>
</feature>
<feature type="binding site" evidence="3">
    <location>
        <position position="238"/>
    </location>
    <ligand>
        <name>NAD(+)</name>
        <dbReference type="ChEBI" id="CHEBI:57540"/>
    </ligand>
</feature>
<feature type="binding site" evidence="3">
    <location>
        <position position="257"/>
    </location>
    <ligand>
        <name>NAD(+)</name>
        <dbReference type="ChEBI" id="CHEBI:57540"/>
    </ligand>
</feature>
<feature type="mutagenesis site" description="Dimerizes; affinity for PntB unchanged, but maximum transhydrogenation rate lowered significantly.">
    <location>
        <begin position="151"/>
        <end position="161"/>
    </location>
</feature>
<feature type="strand" evidence="5">
    <location>
        <begin position="2"/>
        <end position="5"/>
    </location>
</feature>
<feature type="helix" evidence="5">
    <location>
        <begin position="20"/>
        <end position="28"/>
    </location>
</feature>
<feature type="strand" evidence="5">
    <location>
        <begin position="32"/>
        <end position="36"/>
    </location>
</feature>
<feature type="turn" evidence="5">
    <location>
        <begin position="37"/>
        <end position="40"/>
    </location>
</feature>
<feature type="helix" evidence="5">
    <location>
        <begin position="41"/>
        <end position="43"/>
    </location>
</feature>
<feature type="helix" evidence="5">
    <location>
        <begin position="47"/>
        <end position="53"/>
    </location>
</feature>
<feature type="strand" evidence="5">
    <location>
        <begin position="56"/>
        <end position="58"/>
    </location>
</feature>
<feature type="helix" evidence="5">
    <location>
        <begin position="60"/>
        <end position="64"/>
    </location>
</feature>
<feature type="strand" evidence="5">
    <location>
        <begin position="65"/>
        <end position="70"/>
    </location>
</feature>
<feature type="helix" evidence="5">
    <location>
        <begin position="77"/>
        <end position="80"/>
    </location>
</feature>
<feature type="strand" evidence="5">
    <location>
        <begin position="88"/>
        <end position="91"/>
    </location>
</feature>
<feature type="helix" evidence="5">
    <location>
        <begin position="95"/>
        <end position="97"/>
    </location>
</feature>
<feature type="helix" evidence="5">
    <location>
        <begin position="99"/>
        <end position="107"/>
    </location>
</feature>
<feature type="strand" evidence="5">
    <location>
        <begin position="111"/>
        <end position="114"/>
    </location>
</feature>
<feature type="helix" evidence="5">
    <location>
        <begin position="115"/>
        <end position="117"/>
    </location>
</feature>
<feature type="helix" evidence="5">
    <location>
        <begin position="122"/>
        <end position="127"/>
    </location>
</feature>
<feature type="helix" evidence="5">
    <location>
        <begin position="129"/>
        <end position="148"/>
    </location>
</feature>
<feature type="strand" evidence="5">
    <location>
        <begin position="156"/>
        <end position="158"/>
    </location>
</feature>
<feature type="strand" evidence="5">
    <location>
        <begin position="161"/>
        <end position="163"/>
    </location>
</feature>
<feature type="strand" evidence="5">
    <location>
        <begin position="167"/>
        <end position="171"/>
    </location>
</feature>
<feature type="helix" evidence="5">
    <location>
        <begin position="175"/>
        <end position="186"/>
    </location>
</feature>
<feature type="strand" evidence="5">
    <location>
        <begin position="190"/>
        <end position="194"/>
    </location>
</feature>
<feature type="helix" evidence="5">
    <location>
        <begin position="198"/>
        <end position="200"/>
    </location>
</feature>
<feature type="helix" evidence="5">
    <location>
        <begin position="201"/>
        <end position="206"/>
    </location>
</feature>
<feature type="strand" evidence="6">
    <location>
        <begin position="209"/>
        <end position="211"/>
    </location>
</feature>
<feature type="helix" evidence="5">
    <location>
        <begin position="225"/>
        <end position="230"/>
    </location>
</feature>
<feature type="helix" evidence="5">
    <location>
        <begin position="232"/>
        <end position="248"/>
    </location>
</feature>
<feature type="strand" evidence="5">
    <location>
        <begin position="250"/>
        <end position="254"/>
    </location>
</feature>
<feature type="strand" evidence="6">
    <location>
        <begin position="259"/>
        <end position="261"/>
    </location>
</feature>
<feature type="helix" evidence="5">
    <location>
        <begin position="269"/>
        <end position="273"/>
    </location>
</feature>
<feature type="strand" evidence="5">
    <location>
        <begin position="280"/>
        <end position="283"/>
    </location>
</feature>
<feature type="helix" evidence="5">
    <location>
        <begin position="286"/>
        <end position="288"/>
    </location>
</feature>
<feature type="strand" evidence="6">
    <location>
        <begin position="291"/>
        <end position="294"/>
    </location>
</feature>
<feature type="strand" evidence="5">
    <location>
        <begin position="299"/>
        <end position="302"/>
    </location>
</feature>
<feature type="turn" evidence="6">
    <location>
        <begin position="304"/>
        <end position="306"/>
    </location>
</feature>
<feature type="strand" evidence="5">
    <location>
        <begin position="308"/>
        <end position="310"/>
    </location>
</feature>
<feature type="helix" evidence="5">
    <location>
        <begin position="316"/>
        <end position="318"/>
    </location>
</feature>
<feature type="helix" evidence="5">
    <location>
        <begin position="320"/>
        <end position="338"/>
    </location>
</feature>
<feature type="strand" evidence="5">
    <location>
        <begin position="341"/>
        <end position="344"/>
    </location>
</feature>
<feature type="strand" evidence="6">
    <location>
        <begin position="350"/>
        <end position="352"/>
    </location>
</feature>
<feature type="helix" evidence="5">
    <location>
        <begin position="353"/>
        <end position="358"/>
    </location>
</feature>
<feature type="strand" evidence="5">
    <location>
        <begin position="359"/>
        <end position="362"/>
    </location>
</feature>
<reference key="1">
    <citation type="journal article" date="1986" name="Eur. J. Biochem.">
        <title>Nucleotide sequence of the pntA and pntB genes encoding the pyridine nucleotide transhydrogenase of Escherichia coli.</title>
        <authorList>
            <person name="Clarke D.M."/>
            <person name="Loo T.W."/>
            <person name="Gillam S."/>
            <person name="Bragg P.D."/>
        </authorList>
    </citation>
    <scope>NUCLEOTIDE SEQUENCE [GENOMIC DNA]</scope>
</reference>
<reference key="2">
    <citation type="journal article" date="1992" name="Eur. J. Biochem.">
        <title>A mutation at Gly314 of the beta subunit of the Escherichia coli pyridine nucleotide transhydrogenase abolishes activity and affects the NADP(H)-induced conformational change.</title>
        <authorList>
            <person name="Ahmad S."/>
            <person name="Glavas N.A."/>
            <person name="Bragg P.D."/>
        </authorList>
    </citation>
    <scope>SEQUENCE REVISION</scope>
</reference>
<reference key="3">
    <citation type="journal article" date="1996" name="DNA Res.">
        <title>A 570-kb DNA sequence of the Escherichia coli K-12 genome corresponding to the 28.0-40.1 min region on the linkage map.</title>
        <authorList>
            <person name="Aiba H."/>
            <person name="Baba T."/>
            <person name="Fujita K."/>
            <person name="Hayashi K."/>
            <person name="Inada T."/>
            <person name="Isono K."/>
            <person name="Itoh T."/>
            <person name="Kasai H."/>
            <person name="Kashimoto K."/>
            <person name="Kimura S."/>
            <person name="Kitakawa M."/>
            <person name="Kitagawa M."/>
            <person name="Makino K."/>
            <person name="Miki T."/>
            <person name="Mizobuchi K."/>
            <person name="Mori H."/>
            <person name="Mori T."/>
            <person name="Motomura K."/>
            <person name="Nakade S."/>
            <person name="Nakamura Y."/>
            <person name="Nashimoto H."/>
            <person name="Nishio Y."/>
            <person name="Oshima T."/>
            <person name="Saito N."/>
            <person name="Sampei G."/>
            <person name="Seki Y."/>
            <person name="Sivasundaram S."/>
            <person name="Tagami H."/>
            <person name="Takeda J."/>
            <person name="Takemoto K."/>
            <person name="Takeuchi Y."/>
            <person name="Wada C."/>
            <person name="Yamamoto Y."/>
            <person name="Horiuchi T."/>
        </authorList>
    </citation>
    <scope>NUCLEOTIDE SEQUENCE [LARGE SCALE GENOMIC DNA]</scope>
    <source>
        <strain>K12 / W3110 / ATCC 27325 / DSM 5911</strain>
    </source>
</reference>
<reference key="4">
    <citation type="journal article" date="1997" name="Science">
        <title>The complete genome sequence of Escherichia coli K-12.</title>
        <authorList>
            <person name="Blattner F.R."/>
            <person name="Plunkett G. III"/>
            <person name="Bloch C.A."/>
            <person name="Perna N.T."/>
            <person name="Burland V."/>
            <person name="Riley M."/>
            <person name="Collado-Vides J."/>
            <person name="Glasner J.D."/>
            <person name="Rode C.K."/>
            <person name="Mayhew G.F."/>
            <person name="Gregor J."/>
            <person name="Davis N.W."/>
            <person name="Kirkpatrick H.A."/>
            <person name="Goeden M.A."/>
            <person name="Rose D.J."/>
            <person name="Mau B."/>
            <person name="Shao Y."/>
        </authorList>
    </citation>
    <scope>NUCLEOTIDE SEQUENCE [LARGE SCALE GENOMIC DNA]</scope>
    <source>
        <strain>K12 / MG1655 / ATCC 47076</strain>
    </source>
</reference>
<reference key="5">
    <citation type="journal article" date="2006" name="Mol. Syst. Biol.">
        <title>Highly accurate genome sequences of Escherichia coli K-12 strains MG1655 and W3110.</title>
        <authorList>
            <person name="Hayashi K."/>
            <person name="Morooka N."/>
            <person name="Yamamoto Y."/>
            <person name="Fujita K."/>
            <person name="Isono K."/>
            <person name="Choi S."/>
            <person name="Ohtsubo E."/>
            <person name="Baba T."/>
            <person name="Wanner B.L."/>
            <person name="Mori H."/>
            <person name="Horiuchi T."/>
        </authorList>
    </citation>
    <scope>NUCLEOTIDE SEQUENCE [LARGE SCALE GENOMIC DNA]</scope>
    <source>
        <strain>K12 / W3110 / ATCC 27325 / DSM 5911</strain>
    </source>
</reference>
<reference key="6">
    <citation type="journal article" date="1991" name="Biochim. Biophys. Acta">
        <title>Topological analysis of the pyridine nucleotide transhydrogenase of Escherichia coli using proteolytic enzymes.</title>
        <authorList>
            <person name="Tong R.C."/>
            <person name="Glavas N.A."/>
            <person name="Bragg P.D."/>
        </authorList>
    </citation>
    <scope>PROTEIN SEQUENCE OF 1-10; 16-25; 229-238 AND 270-285</scope>
</reference>
<reference key="7">
    <citation type="journal article" date="2005" name="Science">
        <title>Global topology analysis of the Escherichia coli inner membrane proteome.</title>
        <authorList>
            <person name="Daley D.O."/>
            <person name="Rapp M."/>
            <person name="Granseth E."/>
            <person name="Melen K."/>
            <person name="Drew D."/>
            <person name="von Heijne G."/>
        </authorList>
    </citation>
    <scope>TOPOLOGY [LARGE SCALE ANALYSIS]</scope>
    <source>
        <strain>K12 / MG1655 / ATCC 47076</strain>
    </source>
</reference>
<reference key="8">
    <citation type="journal article" date="2005" name="J. Mol. Biol.">
        <title>X-ray structure of domain I of the proton-pumping membrane protein transhydrogenase from Escherichia coli.</title>
        <authorList>
            <person name="Johansson T."/>
            <person name="Oswald C."/>
            <person name="Pedersen A."/>
            <person name="Toernroeth S."/>
            <person name="Okvist M."/>
            <person name="Karlsson B.G."/>
            <person name="Rydstroem J."/>
            <person name="Krengel U."/>
        </authorList>
    </citation>
    <scope>X-RAY CRYSTALLOGRAPHY (1.9 ANGSTROMS) OF 2-394 OF APOENZYME AND IN COMPLEXES WITH NAD AND NADH</scope>
    <scope>FUNCTION</scope>
    <scope>CATALYTIC ACTIVITY</scope>
    <scope>SUBUNIT</scope>
    <scope>CHARACTERIZATION OF MUTANT DEL 151-161</scope>
</reference>
<reference key="9">
    <citation type="submission" date="2005-05" db="PDB data bank">
        <title>Structure determination of a transient complex by NMR using paramagnetic distance restraints - the complex of the soluble domains of Escherichia coli transhydrogenase.</title>
        <authorList>
            <person name="Johansson T."/>
            <person name="Pedersen A."/>
            <person name="Leckner J."/>
            <person name="Karlsson B.G."/>
        </authorList>
    </citation>
    <scope>STRUCTURE BY NMR OF 2-394 IN COMPLEX WITH NAD AND PNTB</scope>
</reference>
<evidence type="ECO:0000255" key="1"/>
<evidence type="ECO:0000269" key="2">
    <source>
    </source>
</evidence>
<evidence type="ECO:0000269" key="3">
    <source ref="9"/>
</evidence>
<evidence type="ECO:0000305" key="4"/>
<evidence type="ECO:0007829" key="5">
    <source>
        <dbReference type="PDB" id="1X13"/>
    </source>
</evidence>
<evidence type="ECO:0007829" key="6">
    <source>
        <dbReference type="PDB" id="2BRU"/>
    </source>
</evidence>
<accession>P07001</accession>
<accession>P76888</accession>
<name>PNTA_ECOLI</name>
<dbReference type="EC" id="7.1.1.1" evidence="2"/>
<dbReference type="EMBL" id="X04195">
    <property type="protein sequence ID" value="CAB37089.1"/>
    <property type="molecule type" value="Genomic_DNA"/>
</dbReference>
<dbReference type="EMBL" id="X66086">
    <property type="protein sequence ID" value="CAA46884.1"/>
    <property type="molecule type" value="Genomic_DNA"/>
</dbReference>
<dbReference type="EMBL" id="U00096">
    <property type="protein sequence ID" value="AAC74675.1"/>
    <property type="molecule type" value="Genomic_DNA"/>
</dbReference>
<dbReference type="EMBL" id="AP009048">
    <property type="protein sequence ID" value="BAA15342.1"/>
    <property type="molecule type" value="Genomic_DNA"/>
</dbReference>
<dbReference type="PIR" id="S24380">
    <property type="entry name" value="DEECXA"/>
</dbReference>
<dbReference type="RefSeq" id="NP_416120.1">
    <property type="nucleotide sequence ID" value="NC_000913.3"/>
</dbReference>
<dbReference type="RefSeq" id="WP_001300486.1">
    <property type="nucleotide sequence ID" value="NZ_SSZK01000001.1"/>
</dbReference>
<dbReference type="PDB" id="1X13">
    <property type="method" value="X-ray"/>
    <property type="resolution" value="1.90 A"/>
    <property type="chains" value="A/B=2-394"/>
</dbReference>
<dbReference type="PDB" id="1X14">
    <property type="method" value="X-ray"/>
    <property type="resolution" value="1.94 A"/>
    <property type="chains" value="A/B=2-394"/>
</dbReference>
<dbReference type="PDB" id="1X15">
    <property type="method" value="X-ray"/>
    <property type="resolution" value="2.04 A"/>
    <property type="chains" value="A/B=2-394"/>
</dbReference>
<dbReference type="PDB" id="2BRU">
    <property type="method" value="NMR"/>
    <property type="chains" value="A/B=2-394"/>
</dbReference>
<dbReference type="PDBsum" id="1X13"/>
<dbReference type="PDBsum" id="1X14"/>
<dbReference type="PDBsum" id="1X15"/>
<dbReference type="PDBsum" id="2BRU"/>
<dbReference type="SMR" id="P07001"/>
<dbReference type="BioGRID" id="4260811">
    <property type="interactions" value="46"/>
</dbReference>
<dbReference type="BioGRID" id="850974">
    <property type="interactions" value="2"/>
</dbReference>
<dbReference type="ComplexPortal" id="CPX-5623">
    <property type="entry name" value="NAD(P) transhydrogenase complex"/>
</dbReference>
<dbReference type="DIP" id="DIP-366N"/>
<dbReference type="FunCoup" id="P07001">
    <property type="interactions" value="376"/>
</dbReference>
<dbReference type="IntAct" id="P07001">
    <property type="interactions" value="2"/>
</dbReference>
<dbReference type="STRING" id="511145.b1603"/>
<dbReference type="TCDB" id="3.D.2.1.1">
    <property type="family name" value="the proton-translocating transhydrogenase (pth) family"/>
</dbReference>
<dbReference type="jPOST" id="P07001"/>
<dbReference type="PaxDb" id="511145-b1603"/>
<dbReference type="EnsemblBacteria" id="AAC74675">
    <property type="protein sequence ID" value="AAC74675"/>
    <property type="gene ID" value="b1603"/>
</dbReference>
<dbReference type="GeneID" id="946628"/>
<dbReference type="KEGG" id="ecj:JW1595"/>
<dbReference type="KEGG" id="eco:b1603"/>
<dbReference type="KEGG" id="ecoc:C3026_09230"/>
<dbReference type="PATRIC" id="fig|1411691.4.peg.659"/>
<dbReference type="EchoBASE" id="EB0737"/>
<dbReference type="eggNOG" id="COG3288">
    <property type="taxonomic scope" value="Bacteria"/>
</dbReference>
<dbReference type="HOGENOM" id="CLU_003376_2_1_6"/>
<dbReference type="InParanoid" id="P07001"/>
<dbReference type="OMA" id="LDRYFPM"/>
<dbReference type="OrthoDB" id="9804592at2"/>
<dbReference type="PhylomeDB" id="P07001"/>
<dbReference type="BioCyc" id="EcoCyc:PNTA-MONOMER"/>
<dbReference type="BioCyc" id="MetaCyc:PNTA-MONOMER"/>
<dbReference type="BRENDA" id="1.6.1.2">
    <property type="organism ID" value="2026"/>
</dbReference>
<dbReference type="BRENDA" id="7.1.1.1">
    <property type="organism ID" value="2026"/>
</dbReference>
<dbReference type="EvolutionaryTrace" id="P07001"/>
<dbReference type="PRO" id="PR:P07001"/>
<dbReference type="Proteomes" id="UP000000625">
    <property type="component" value="Chromosome"/>
</dbReference>
<dbReference type="GO" id="GO:0005886">
    <property type="term" value="C:plasma membrane"/>
    <property type="evidence" value="ECO:0000314"/>
    <property type="project" value="UniProtKB"/>
</dbReference>
<dbReference type="GO" id="GO:0050661">
    <property type="term" value="F:NADP binding"/>
    <property type="evidence" value="ECO:0000314"/>
    <property type="project" value="UniProtKB"/>
</dbReference>
<dbReference type="GO" id="GO:0016491">
    <property type="term" value="F:oxidoreductase activity"/>
    <property type="evidence" value="ECO:0007669"/>
    <property type="project" value="InterPro"/>
</dbReference>
<dbReference type="GO" id="GO:0046983">
    <property type="term" value="F:protein dimerization activity"/>
    <property type="evidence" value="ECO:0000314"/>
    <property type="project" value="UniProtKB"/>
</dbReference>
<dbReference type="GO" id="GO:0008750">
    <property type="term" value="F:proton-translocating NAD(P)+ transhydrogenase activity"/>
    <property type="evidence" value="ECO:0000314"/>
    <property type="project" value="UniProtKB"/>
</dbReference>
<dbReference type="GO" id="GO:0006740">
    <property type="term" value="P:NADPH regeneration"/>
    <property type="evidence" value="ECO:0000314"/>
    <property type="project" value="UniProtKB"/>
</dbReference>
<dbReference type="GO" id="GO:0120029">
    <property type="term" value="P:proton export across plasma membrane"/>
    <property type="evidence" value="ECO:0000314"/>
    <property type="project" value="ComplexPortal"/>
</dbReference>
<dbReference type="CDD" id="cd05304">
    <property type="entry name" value="Rubrum_tdh"/>
    <property type="match status" value="1"/>
</dbReference>
<dbReference type="FunFam" id="3.40.50.720:FF:000028">
    <property type="entry name" value="NAD(P) transhydrogenase subunit alpha"/>
    <property type="match status" value="1"/>
</dbReference>
<dbReference type="FunFam" id="3.40.50.720:FF:000063">
    <property type="entry name" value="NAD(P) transhydrogenase subunit alpha"/>
    <property type="match status" value="1"/>
</dbReference>
<dbReference type="Gene3D" id="3.40.50.720">
    <property type="entry name" value="NAD(P)-binding Rossmann-like Domain"/>
    <property type="match status" value="2"/>
</dbReference>
<dbReference type="InterPro" id="IPR008143">
    <property type="entry name" value="Ala_DH/PNT_CS2"/>
</dbReference>
<dbReference type="InterPro" id="IPR008142">
    <property type="entry name" value="AlaDH/PNT_CS1"/>
</dbReference>
<dbReference type="InterPro" id="IPR007886">
    <property type="entry name" value="AlaDH/PNT_N"/>
</dbReference>
<dbReference type="InterPro" id="IPR007698">
    <property type="entry name" value="AlaDH/PNT_NAD(H)-bd"/>
</dbReference>
<dbReference type="InterPro" id="IPR036291">
    <property type="entry name" value="NAD(P)-bd_dom_sf"/>
</dbReference>
<dbReference type="InterPro" id="IPR026255">
    <property type="entry name" value="NADP_transhyd_a"/>
</dbReference>
<dbReference type="InterPro" id="IPR024605">
    <property type="entry name" value="NADP_transhyd_a_C"/>
</dbReference>
<dbReference type="NCBIfam" id="TIGR00561">
    <property type="entry name" value="pntA"/>
    <property type="match status" value="1"/>
</dbReference>
<dbReference type="NCBIfam" id="NF006942">
    <property type="entry name" value="PRK09424.1"/>
    <property type="match status" value="1"/>
</dbReference>
<dbReference type="PANTHER" id="PTHR10160">
    <property type="entry name" value="NAD(P) TRANSHYDROGENASE"/>
    <property type="match status" value="1"/>
</dbReference>
<dbReference type="PANTHER" id="PTHR10160:SF19">
    <property type="entry name" value="PROTON-TRANSLOCATING NAD(P)(+) TRANSHYDROGENASE"/>
    <property type="match status" value="1"/>
</dbReference>
<dbReference type="Pfam" id="PF01262">
    <property type="entry name" value="AlaDh_PNT_C"/>
    <property type="match status" value="1"/>
</dbReference>
<dbReference type="Pfam" id="PF05222">
    <property type="entry name" value="AlaDh_PNT_N"/>
    <property type="match status" value="1"/>
</dbReference>
<dbReference type="Pfam" id="PF12769">
    <property type="entry name" value="PNTB_4TM"/>
    <property type="match status" value="1"/>
</dbReference>
<dbReference type="PIRSF" id="PIRSF000203">
    <property type="entry name" value="NADP_transhydrogenase_alpha"/>
    <property type="match status" value="1"/>
</dbReference>
<dbReference type="SMART" id="SM01002">
    <property type="entry name" value="AlaDh_PNT_C"/>
    <property type="match status" value="1"/>
</dbReference>
<dbReference type="SMART" id="SM01003">
    <property type="entry name" value="AlaDh_PNT_N"/>
    <property type="match status" value="1"/>
</dbReference>
<dbReference type="SUPFAM" id="SSF52283">
    <property type="entry name" value="Formate/glycerate dehydrogenase catalytic domain-like"/>
    <property type="match status" value="1"/>
</dbReference>
<dbReference type="SUPFAM" id="SSF51735">
    <property type="entry name" value="NAD(P)-binding Rossmann-fold domains"/>
    <property type="match status" value="1"/>
</dbReference>
<dbReference type="PROSITE" id="PS00836">
    <property type="entry name" value="ALADH_PNT_1"/>
    <property type="match status" value="1"/>
</dbReference>
<dbReference type="PROSITE" id="PS00837">
    <property type="entry name" value="ALADH_PNT_2"/>
    <property type="match status" value="1"/>
</dbReference>